<protein>
    <recommendedName>
        <fullName evidence="1">Small ribosomal subunit protein uS11</fullName>
    </recommendedName>
    <alternativeName>
        <fullName evidence="2">30S ribosomal protein S11</fullName>
    </alternativeName>
</protein>
<feature type="chain" id="PRO_0000123273" description="Small ribosomal subunit protein uS11">
    <location>
        <begin position="1"/>
        <end position="126"/>
    </location>
</feature>
<name>RS11_METMA</name>
<comment type="function">
    <text evidence="1">Located on the platform of the 30S subunit.</text>
</comment>
<comment type="subunit">
    <text evidence="1">Part of the 30S ribosomal subunit.</text>
</comment>
<comment type="similarity">
    <text evidence="1">Belongs to the universal ribosomal protein uS11 family.</text>
</comment>
<sequence>MADMKWAVAHIKSSFNNTIITVTDITGAETIAKSSGGMVVKAARDESSPYTAMQMAGQLADQLRDKGINGIHIRVRAPGGNKQRSPGPGAQAAIRAFARAGIRIGRIEDVTPVPHDGTRPKGGRRV</sequence>
<gene>
    <name evidence="1" type="primary">rps11</name>
    <name type="ordered locus">MM_2157</name>
</gene>
<organism>
    <name type="scientific">Methanosarcina mazei (strain ATCC BAA-159 / DSM 3647 / Goe1 / Go1 / JCM 11833 / OCM 88)</name>
    <name type="common">Methanosarcina frisia</name>
    <dbReference type="NCBI Taxonomy" id="192952"/>
    <lineage>
        <taxon>Archaea</taxon>
        <taxon>Methanobacteriati</taxon>
        <taxon>Methanobacteriota</taxon>
        <taxon>Stenosarchaea group</taxon>
        <taxon>Methanomicrobia</taxon>
        <taxon>Methanosarcinales</taxon>
        <taxon>Methanosarcinaceae</taxon>
        <taxon>Methanosarcina</taxon>
    </lineage>
</organism>
<reference key="1">
    <citation type="journal article" date="2002" name="J. Mol. Microbiol. Biotechnol.">
        <title>The genome of Methanosarcina mazei: evidence for lateral gene transfer between Bacteria and Archaea.</title>
        <authorList>
            <person name="Deppenmeier U."/>
            <person name="Johann A."/>
            <person name="Hartsch T."/>
            <person name="Merkl R."/>
            <person name="Schmitz R.A."/>
            <person name="Martinez-Arias R."/>
            <person name="Henne A."/>
            <person name="Wiezer A."/>
            <person name="Baeumer S."/>
            <person name="Jacobi C."/>
            <person name="Brueggemann H."/>
            <person name="Lienard T."/>
            <person name="Christmann A."/>
            <person name="Boemecke M."/>
            <person name="Steckel S."/>
            <person name="Bhattacharyya A."/>
            <person name="Lykidis A."/>
            <person name="Overbeek R."/>
            <person name="Klenk H.-P."/>
            <person name="Gunsalus R.P."/>
            <person name="Fritz H.-J."/>
            <person name="Gottschalk G."/>
        </authorList>
    </citation>
    <scope>NUCLEOTIDE SEQUENCE [LARGE SCALE GENOMIC DNA]</scope>
    <source>
        <strain>ATCC BAA-159 / DSM 3647 / Goe1 / Go1 / JCM 11833 / OCM 88</strain>
    </source>
</reference>
<evidence type="ECO:0000255" key="1">
    <source>
        <dbReference type="HAMAP-Rule" id="MF_01310"/>
    </source>
</evidence>
<evidence type="ECO:0000305" key="2"/>
<keyword id="KW-0687">Ribonucleoprotein</keyword>
<keyword id="KW-0689">Ribosomal protein</keyword>
<keyword id="KW-0694">RNA-binding</keyword>
<keyword id="KW-0699">rRNA-binding</keyword>
<dbReference type="EMBL" id="AE008384">
    <property type="protein sequence ID" value="AAM31853.1"/>
    <property type="molecule type" value="Genomic_DNA"/>
</dbReference>
<dbReference type="RefSeq" id="WP_011034088.1">
    <property type="nucleotide sequence ID" value="NC_003901.1"/>
</dbReference>
<dbReference type="SMR" id="Q8PV17"/>
<dbReference type="KEGG" id="mma:MM_2157"/>
<dbReference type="PATRIC" id="fig|192952.21.peg.2473"/>
<dbReference type="eggNOG" id="arCOG04240">
    <property type="taxonomic scope" value="Archaea"/>
</dbReference>
<dbReference type="HOGENOM" id="CLU_072439_6_1_2"/>
<dbReference type="Proteomes" id="UP000000595">
    <property type="component" value="Chromosome"/>
</dbReference>
<dbReference type="GO" id="GO:1990904">
    <property type="term" value="C:ribonucleoprotein complex"/>
    <property type="evidence" value="ECO:0007669"/>
    <property type="project" value="UniProtKB-KW"/>
</dbReference>
<dbReference type="GO" id="GO:0005840">
    <property type="term" value="C:ribosome"/>
    <property type="evidence" value="ECO:0007669"/>
    <property type="project" value="UniProtKB-KW"/>
</dbReference>
<dbReference type="GO" id="GO:0019843">
    <property type="term" value="F:rRNA binding"/>
    <property type="evidence" value="ECO:0007669"/>
    <property type="project" value="UniProtKB-UniRule"/>
</dbReference>
<dbReference type="GO" id="GO:0003735">
    <property type="term" value="F:structural constituent of ribosome"/>
    <property type="evidence" value="ECO:0007669"/>
    <property type="project" value="InterPro"/>
</dbReference>
<dbReference type="GO" id="GO:0006412">
    <property type="term" value="P:translation"/>
    <property type="evidence" value="ECO:0007669"/>
    <property type="project" value="UniProtKB-UniRule"/>
</dbReference>
<dbReference type="FunFam" id="3.30.420.80:FF:000007">
    <property type="entry name" value="30S ribosomal protein S11"/>
    <property type="match status" value="1"/>
</dbReference>
<dbReference type="Gene3D" id="3.30.420.80">
    <property type="entry name" value="Ribosomal protein S11"/>
    <property type="match status" value="1"/>
</dbReference>
<dbReference type="HAMAP" id="MF_01310">
    <property type="entry name" value="Ribosomal_uS11"/>
    <property type="match status" value="1"/>
</dbReference>
<dbReference type="InterPro" id="IPR001971">
    <property type="entry name" value="Ribosomal_uS11"/>
</dbReference>
<dbReference type="InterPro" id="IPR019961">
    <property type="entry name" value="Ribosomal_uS11_archaeal"/>
</dbReference>
<dbReference type="InterPro" id="IPR018102">
    <property type="entry name" value="Ribosomal_uS11_CS"/>
</dbReference>
<dbReference type="InterPro" id="IPR036967">
    <property type="entry name" value="Ribosomal_uS11_sf"/>
</dbReference>
<dbReference type="NCBIfam" id="TIGR03628">
    <property type="entry name" value="arch_S11P"/>
    <property type="match status" value="1"/>
</dbReference>
<dbReference type="NCBIfam" id="NF007176">
    <property type="entry name" value="PRK09607.1"/>
    <property type="match status" value="1"/>
</dbReference>
<dbReference type="PANTHER" id="PTHR11759">
    <property type="entry name" value="40S RIBOSOMAL PROTEIN S14/30S RIBOSOMAL PROTEIN S11"/>
    <property type="match status" value="1"/>
</dbReference>
<dbReference type="Pfam" id="PF00411">
    <property type="entry name" value="Ribosomal_S11"/>
    <property type="match status" value="1"/>
</dbReference>
<dbReference type="PIRSF" id="PIRSF002131">
    <property type="entry name" value="Ribosomal_S11"/>
    <property type="match status" value="1"/>
</dbReference>
<dbReference type="SUPFAM" id="SSF53137">
    <property type="entry name" value="Translational machinery components"/>
    <property type="match status" value="1"/>
</dbReference>
<dbReference type="PROSITE" id="PS00054">
    <property type="entry name" value="RIBOSOMAL_S11"/>
    <property type="match status" value="1"/>
</dbReference>
<accession>Q8PV17</accession>
<proteinExistence type="inferred from homology"/>